<sequence>MDPLEARQLIPAAPGSDDEGRTSRARLCQAVNLPANGALVMPNGEVITLTAPAAFKPACAPNTTPAIIAGPGGTTGAGVDDAAHVGPQFSDLSDPFYASTFPQCYALAATTVIAYTLVIMLVITPRSFLDGGIVVLGRRGFTSGGSGHGIIGGRPWLQKVAALTVAISLTIATADTFKVAEQQYAFGLQNARELQDKVLNGTELKIIRIISDTFLWLAQAQTLIRLFPRQREKVIIKWTAFALITFDLIFDSLNSFQFPGPGNSRPGSFTDAIPALSYLFQLALGVLYAAWVIYYSLMKKKYAYYHPQMKNICFVAGLSLLSILVPVVFFILDISKPEFTGWGDYVRWVGAAAASVIVWEWVERIEALEREEKRNGILGREVFDGDEMLETDSDATWPQRSRATKGPHGDGDDDDDDGEGGRRIAVGDGTGRRRARRANGSHDSLAADSGRGRNHTQLWTSIASRYRSRPNNGADVSETEKDNTRQTSKNVRPAAARFLQPPLWPARPPPAATPVSRTDTASADSTVYAIRYHPLTDVHSRTTTRPTPPPQLSTERQSAVVDVSGTPTAVEDVRSHDQPSGSQSASPSPPRDQQSPGPPNLVRLSREETRRERRQSLATTSRTGTRVGPDSDDPSASSQQGGESSRGSESTAAKGWRTLAQTLPFRGGTARSAEDSSDSQSTTSKSRSKLQVSREGKSDRWDLRNRMEDFAVTQAERIRERIRPTPDTDSLPVTVIPAPARRGAALAQLLEEDESRQGSGRPRPQDDERPILGSPTLPSSGQRQNSMGPEPLSSNDDLSDSHIPPPAVVRAASRANTSRSTTRDRPPEP</sequence>
<evidence type="ECO:0000250" key="1"/>
<evidence type="ECO:0000255" key="2"/>
<evidence type="ECO:0000256" key="3">
    <source>
        <dbReference type="SAM" id="MobiDB-lite"/>
    </source>
</evidence>
<evidence type="ECO:0000305" key="4"/>
<feature type="chain" id="PRO_0000058202" description="pH-response regulator protein palH/RIM21">
    <location>
        <begin position="1"/>
        <end position="829"/>
    </location>
</feature>
<feature type="topological domain" description="Periplasmic" evidence="2">
    <location>
        <begin position="1"/>
        <end position="34"/>
    </location>
</feature>
<feature type="transmembrane region" description="Helical" evidence="2">
    <location>
        <begin position="35"/>
        <end position="55"/>
    </location>
</feature>
<feature type="topological domain" description="Cytoplasmic" evidence="2">
    <location>
        <begin position="56"/>
        <end position="103"/>
    </location>
</feature>
<feature type="transmembrane region" description="Helical" evidence="2">
    <location>
        <begin position="104"/>
        <end position="124"/>
    </location>
</feature>
<feature type="topological domain" description="Periplasmic" evidence="2">
    <location>
        <begin position="125"/>
        <end position="159"/>
    </location>
</feature>
<feature type="transmembrane region" description="Helical" evidence="2">
    <location>
        <begin position="160"/>
        <end position="180"/>
    </location>
</feature>
<feature type="topological domain" description="Cytoplasmic" evidence="2">
    <location>
        <begin position="181"/>
        <end position="233"/>
    </location>
</feature>
<feature type="transmembrane region" description="Helical" evidence="2">
    <location>
        <begin position="234"/>
        <end position="254"/>
    </location>
</feature>
<feature type="topological domain" description="Periplasmic" evidence="2">
    <location>
        <begin position="255"/>
        <end position="272"/>
    </location>
</feature>
<feature type="transmembrane region" description="Helical" evidence="2">
    <location>
        <begin position="273"/>
        <end position="293"/>
    </location>
</feature>
<feature type="topological domain" description="Cytoplasmic" evidence="2">
    <location>
        <begin position="294"/>
        <end position="311"/>
    </location>
</feature>
<feature type="transmembrane region" description="Helical" evidence="2">
    <location>
        <begin position="312"/>
        <end position="332"/>
    </location>
</feature>
<feature type="topological domain" description="Periplasmic" evidence="2">
    <location>
        <begin position="333"/>
        <end position="338"/>
    </location>
</feature>
<feature type="transmembrane region" description="Helical" evidence="2">
    <location>
        <begin position="339"/>
        <end position="359"/>
    </location>
</feature>
<feature type="topological domain" description="Cytoplasmic" evidence="2">
    <location>
        <begin position="360"/>
        <end position="829"/>
    </location>
</feature>
<feature type="region of interest" description="Disordered" evidence="3">
    <location>
        <begin position="1"/>
        <end position="23"/>
    </location>
</feature>
<feature type="region of interest" description="Disordered" evidence="3">
    <location>
        <begin position="389"/>
        <end position="522"/>
    </location>
</feature>
<feature type="region of interest" description="Disordered" evidence="3">
    <location>
        <begin position="537"/>
        <end position="702"/>
    </location>
</feature>
<feature type="region of interest" description="Disordered" evidence="3">
    <location>
        <begin position="714"/>
        <end position="829"/>
    </location>
</feature>
<feature type="compositionally biased region" description="Pro residues" evidence="3">
    <location>
        <begin position="502"/>
        <end position="512"/>
    </location>
</feature>
<feature type="compositionally biased region" description="Basic and acidic residues" evidence="3">
    <location>
        <begin position="604"/>
        <end position="615"/>
    </location>
</feature>
<feature type="compositionally biased region" description="Low complexity" evidence="3">
    <location>
        <begin position="634"/>
        <end position="653"/>
    </location>
</feature>
<feature type="compositionally biased region" description="Basic and acidic residues" evidence="3">
    <location>
        <begin position="692"/>
        <end position="702"/>
    </location>
</feature>
<feature type="compositionally biased region" description="Basic and acidic residues" evidence="3">
    <location>
        <begin position="716"/>
        <end position="726"/>
    </location>
</feature>
<feature type="compositionally biased region" description="Polar residues" evidence="3">
    <location>
        <begin position="776"/>
        <end position="796"/>
    </location>
</feature>
<reference key="1">
    <citation type="journal article" date="2005" name="Nature">
        <title>The genome sequence of the rice blast fungus Magnaporthe grisea.</title>
        <authorList>
            <person name="Dean R.A."/>
            <person name="Talbot N.J."/>
            <person name="Ebbole D.J."/>
            <person name="Farman M.L."/>
            <person name="Mitchell T.K."/>
            <person name="Orbach M.J."/>
            <person name="Thon M.R."/>
            <person name="Kulkarni R."/>
            <person name="Xu J.-R."/>
            <person name="Pan H."/>
            <person name="Read N.D."/>
            <person name="Lee Y.-H."/>
            <person name="Carbone I."/>
            <person name="Brown D."/>
            <person name="Oh Y.Y."/>
            <person name="Donofrio N."/>
            <person name="Jeong J.S."/>
            <person name="Soanes D.M."/>
            <person name="Djonovic S."/>
            <person name="Kolomiets E."/>
            <person name="Rehmeyer C."/>
            <person name="Li W."/>
            <person name="Harding M."/>
            <person name="Kim S."/>
            <person name="Lebrun M.-H."/>
            <person name="Bohnert H."/>
            <person name="Coughlan S."/>
            <person name="Butler J."/>
            <person name="Calvo S.E."/>
            <person name="Ma L.-J."/>
            <person name="Nicol R."/>
            <person name="Purcell S."/>
            <person name="Nusbaum C."/>
            <person name="Galagan J.E."/>
            <person name="Birren B.W."/>
        </authorList>
    </citation>
    <scope>NUCLEOTIDE SEQUENCE [LARGE SCALE GENOMIC DNA]</scope>
    <source>
        <strain>70-15 / ATCC MYA-4617 / FGSC 8958</strain>
    </source>
</reference>
<accession>Q52E66</accession>
<accession>A4R8L3</accession>
<accession>G4N799</accession>
<dbReference type="EMBL" id="CM001234">
    <property type="protein sequence ID" value="EHA50809.1"/>
    <property type="molecule type" value="Genomic_DNA"/>
</dbReference>
<dbReference type="RefSeq" id="XP_003717128.1">
    <property type="nucleotide sequence ID" value="XM_003717080.1"/>
</dbReference>
<dbReference type="STRING" id="242507.Q52E66"/>
<dbReference type="EnsemblFungi" id="MGG_06440T0">
    <property type="protein sequence ID" value="MGG_06440T0"/>
    <property type="gene ID" value="MGG_06440"/>
</dbReference>
<dbReference type="GeneID" id="2684595"/>
<dbReference type="KEGG" id="mgr:MGG_06440"/>
<dbReference type="VEuPathDB" id="FungiDB:MGG_06440"/>
<dbReference type="eggNOG" id="ENOG502QWMT">
    <property type="taxonomic scope" value="Eukaryota"/>
</dbReference>
<dbReference type="HOGENOM" id="CLU_014594_1_0_1"/>
<dbReference type="InParanoid" id="Q52E66"/>
<dbReference type="OMA" id="AWVVYYA"/>
<dbReference type="OrthoDB" id="5393256at2759"/>
<dbReference type="Proteomes" id="UP000009058">
    <property type="component" value="Chromosome 4"/>
</dbReference>
<dbReference type="GO" id="GO:0005886">
    <property type="term" value="C:plasma membrane"/>
    <property type="evidence" value="ECO:0007669"/>
    <property type="project" value="UniProtKB-SubCell"/>
</dbReference>
<dbReference type="GO" id="GO:0071467">
    <property type="term" value="P:cellular response to pH"/>
    <property type="evidence" value="ECO:0007669"/>
    <property type="project" value="TreeGrafter"/>
</dbReference>
<dbReference type="InterPro" id="IPR014844">
    <property type="entry name" value="PalH"/>
</dbReference>
<dbReference type="PANTHER" id="PTHR35779">
    <property type="entry name" value="PH-RESPONSE REGULATOR PROTEIN PALH/RIM21"/>
    <property type="match status" value="1"/>
</dbReference>
<dbReference type="PANTHER" id="PTHR35779:SF1">
    <property type="entry name" value="PH-RESPONSE REGULATOR PROTEIN PALH_RIM21"/>
    <property type="match status" value="1"/>
</dbReference>
<dbReference type="Pfam" id="PF08733">
    <property type="entry name" value="PalH"/>
    <property type="match status" value="1"/>
</dbReference>
<organism>
    <name type="scientific">Pyricularia oryzae (strain 70-15 / ATCC MYA-4617 / FGSC 8958)</name>
    <name type="common">Rice blast fungus</name>
    <name type="synonym">Magnaporthe oryzae</name>
    <dbReference type="NCBI Taxonomy" id="242507"/>
    <lineage>
        <taxon>Eukaryota</taxon>
        <taxon>Fungi</taxon>
        <taxon>Dikarya</taxon>
        <taxon>Ascomycota</taxon>
        <taxon>Pezizomycotina</taxon>
        <taxon>Sordariomycetes</taxon>
        <taxon>Sordariomycetidae</taxon>
        <taxon>Magnaporthales</taxon>
        <taxon>Pyriculariaceae</taxon>
        <taxon>Pyricularia</taxon>
    </lineage>
</organism>
<keyword id="KW-1003">Cell membrane</keyword>
<keyword id="KW-0472">Membrane</keyword>
<keyword id="KW-1185">Reference proteome</keyword>
<keyword id="KW-0812">Transmembrane</keyword>
<keyword id="KW-1133">Transmembrane helix</keyword>
<gene>
    <name type="primary">RIM21</name>
    <name type="ORF">MGG_06440</name>
</gene>
<comment type="function">
    <text evidence="1">Required for the proteolytic cleavage of the transcription factor RIM101 in response to alkaline ambient pH.</text>
</comment>
<comment type="subcellular location">
    <subcellularLocation>
        <location evidence="1">Cell membrane</location>
        <topology evidence="1">Multi-pass membrane protein</topology>
    </subcellularLocation>
</comment>
<comment type="similarity">
    <text evidence="4">Belongs to the palH/RIM21 family.</text>
</comment>
<protein>
    <recommendedName>
        <fullName>pH-response regulator protein palH/RIM21</fullName>
    </recommendedName>
</protein>
<name>PALH_PYRO7</name>
<proteinExistence type="inferred from homology"/>